<gene>
    <name evidence="1" type="primary">aroC</name>
    <name type="ordered locus">BDI_2082</name>
</gene>
<comment type="function">
    <text evidence="1">Catalyzes the anti-1,4-elimination of the C-3 phosphate and the C-6 proR hydrogen from 5-enolpyruvylshikimate-3-phosphate (EPSP) to yield chorismate, which is the branch point compound that serves as the starting substrate for the three terminal pathways of aromatic amino acid biosynthesis. This reaction introduces a second double bond into the aromatic ring system.</text>
</comment>
<comment type="catalytic activity">
    <reaction evidence="1">
        <text>5-O-(1-carboxyvinyl)-3-phosphoshikimate = chorismate + phosphate</text>
        <dbReference type="Rhea" id="RHEA:21020"/>
        <dbReference type="ChEBI" id="CHEBI:29748"/>
        <dbReference type="ChEBI" id="CHEBI:43474"/>
        <dbReference type="ChEBI" id="CHEBI:57701"/>
        <dbReference type="EC" id="4.2.3.5"/>
    </reaction>
</comment>
<comment type="cofactor">
    <cofactor evidence="1">
        <name>FMNH2</name>
        <dbReference type="ChEBI" id="CHEBI:57618"/>
    </cofactor>
    <text evidence="1">Reduced FMN (FMNH(2)).</text>
</comment>
<comment type="pathway">
    <text evidence="1">Metabolic intermediate biosynthesis; chorismate biosynthesis; chorismate from D-erythrose 4-phosphate and phosphoenolpyruvate: step 7/7.</text>
</comment>
<comment type="subunit">
    <text evidence="1">Homotetramer.</text>
</comment>
<comment type="similarity">
    <text evidence="1">Belongs to the chorismate synthase family.</text>
</comment>
<sequence>MNTFGNIYRLTSFGESHGPGIGGVIDGCPAGIELDTAFIQQELNRRKPGQSRITTPRKEDDEVQFLSGIYEGKTTGTPIGFIIWNKNQHSSDYDNMKTVYRPSHADYTYQTKYGIRDPRGGGRSSARETIARCVAGAIAKLALKQYGIQIQAYTSQVGPIKLAGSYQDYDLSLTEKSDVRCPDPKTASEMETLIAEVKSKGDTIGGVITCVAKGVPVGLGEPVFGKLHAALGHAMLTINAVKGFEYGDGFNAAFFRGSERNDRFFNDNGHINTRTNNSGGIQGGISNGQDIYFRVAFKSVATILMEQETVNMEGEDTILKARGRHDPCVLPRAVPIVESMTAMTLLDYLLIQKTRENF</sequence>
<accession>A6LDP9</accession>
<name>AROC_PARD8</name>
<protein>
    <recommendedName>
        <fullName evidence="1">Chorismate synthase</fullName>
        <shortName evidence="1">CS</shortName>
        <ecNumber evidence="1">4.2.3.5</ecNumber>
    </recommendedName>
    <alternativeName>
        <fullName evidence="1">5-enolpyruvylshikimate-3-phosphate phospholyase</fullName>
    </alternativeName>
</protein>
<organism>
    <name type="scientific">Parabacteroides distasonis (strain ATCC 8503 / DSM 20701 / CIP 104284 / JCM 5825 / NCTC 11152)</name>
    <dbReference type="NCBI Taxonomy" id="435591"/>
    <lineage>
        <taxon>Bacteria</taxon>
        <taxon>Pseudomonadati</taxon>
        <taxon>Bacteroidota</taxon>
        <taxon>Bacteroidia</taxon>
        <taxon>Bacteroidales</taxon>
        <taxon>Tannerellaceae</taxon>
        <taxon>Parabacteroides</taxon>
    </lineage>
</organism>
<proteinExistence type="inferred from homology"/>
<reference key="1">
    <citation type="journal article" date="2007" name="PLoS Biol.">
        <title>Evolution of symbiotic bacteria in the distal human intestine.</title>
        <authorList>
            <person name="Xu J."/>
            <person name="Mahowald M.A."/>
            <person name="Ley R.E."/>
            <person name="Lozupone C.A."/>
            <person name="Hamady M."/>
            <person name="Martens E.C."/>
            <person name="Henrissat B."/>
            <person name="Coutinho P.M."/>
            <person name="Minx P."/>
            <person name="Latreille P."/>
            <person name="Cordum H."/>
            <person name="Van Brunt A."/>
            <person name="Kim K."/>
            <person name="Fulton R.S."/>
            <person name="Fulton L.A."/>
            <person name="Clifton S.W."/>
            <person name="Wilson R.K."/>
            <person name="Knight R.D."/>
            <person name="Gordon J.I."/>
        </authorList>
    </citation>
    <scope>NUCLEOTIDE SEQUENCE [LARGE SCALE GENOMIC DNA]</scope>
    <source>
        <strain>ATCC 8503 / DSM 20701 / CIP 104284 / JCM 5825 / NCTC 11152</strain>
    </source>
</reference>
<feature type="chain" id="PRO_0000322418" description="Chorismate synthase">
    <location>
        <begin position="1"/>
        <end position="358"/>
    </location>
</feature>
<feature type="binding site" evidence="1">
    <location>
        <position position="46"/>
    </location>
    <ligand>
        <name>NADP(+)</name>
        <dbReference type="ChEBI" id="CHEBI:58349"/>
    </ligand>
</feature>
<feature type="binding site" evidence="1">
    <location>
        <position position="52"/>
    </location>
    <ligand>
        <name>NADP(+)</name>
        <dbReference type="ChEBI" id="CHEBI:58349"/>
    </ligand>
</feature>
<feature type="binding site" evidence="1">
    <location>
        <begin position="123"/>
        <end position="125"/>
    </location>
    <ligand>
        <name>FMN</name>
        <dbReference type="ChEBI" id="CHEBI:58210"/>
    </ligand>
</feature>
<feature type="binding site" evidence="1">
    <location>
        <begin position="239"/>
        <end position="240"/>
    </location>
    <ligand>
        <name>FMN</name>
        <dbReference type="ChEBI" id="CHEBI:58210"/>
    </ligand>
</feature>
<feature type="binding site" evidence="1">
    <location>
        <position position="283"/>
    </location>
    <ligand>
        <name>FMN</name>
        <dbReference type="ChEBI" id="CHEBI:58210"/>
    </ligand>
</feature>
<feature type="binding site" evidence="1">
    <location>
        <begin position="298"/>
        <end position="302"/>
    </location>
    <ligand>
        <name>FMN</name>
        <dbReference type="ChEBI" id="CHEBI:58210"/>
    </ligand>
</feature>
<feature type="binding site" evidence="1">
    <location>
        <position position="324"/>
    </location>
    <ligand>
        <name>FMN</name>
        <dbReference type="ChEBI" id="CHEBI:58210"/>
    </ligand>
</feature>
<evidence type="ECO:0000255" key="1">
    <source>
        <dbReference type="HAMAP-Rule" id="MF_00300"/>
    </source>
</evidence>
<keyword id="KW-0028">Amino-acid biosynthesis</keyword>
<keyword id="KW-0057">Aromatic amino acid biosynthesis</keyword>
<keyword id="KW-0274">FAD</keyword>
<keyword id="KW-0285">Flavoprotein</keyword>
<keyword id="KW-0288">FMN</keyword>
<keyword id="KW-0456">Lyase</keyword>
<keyword id="KW-0521">NADP</keyword>
<keyword id="KW-1185">Reference proteome</keyword>
<dbReference type="EC" id="4.2.3.5" evidence="1"/>
<dbReference type="EMBL" id="CP000140">
    <property type="protein sequence ID" value="ABR43813.1"/>
    <property type="molecule type" value="Genomic_DNA"/>
</dbReference>
<dbReference type="RefSeq" id="WP_005854434.1">
    <property type="nucleotide sequence ID" value="NZ_LR215978.1"/>
</dbReference>
<dbReference type="SMR" id="A6LDP9"/>
<dbReference type="STRING" id="435591.BDI_2082"/>
<dbReference type="PaxDb" id="435591-BDI_2082"/>
<dbReference type="KEGG" id="pdi:BDI_2082"/>
<dbReference type="eggNOG" id="COG0082">
    <property type="taxonomic scope" value="Bacteria"/>
</dbReference>
<dbReference type="HOGENOM" id="CLU_034547_0_2_10"/>
<dbReference type="BioCyc" id="PDIS435591:G1G5A-2136-MONOMER"/>
<dbReference type="UniPathway" id="UPA00053">
    <property type="reaction ID" value="UER00090"/>
</dbReference>
<dbReference type="Proteomes" id="UP000000566">
    <property type="component" value="Chromosome"/>
</dbReference>
<dbReference type="GO" id="GO:0005829">
    <property type="term" value="C:cytosol"/>
    <property type="evidence" value="ECO:0007669"/>
    <property type="project" value="TreeGrafter"/>
</dbReference>
<dbReference type="GO" id="GO:0004107">
    <property type="term" value="F:chorismate synthase activity"/>
    <property type="evidence" value="ECO:0007669"/>
    <property type="project" value="UniProtKB-UniRule"/>
</dbReference>
<dbReference type="GO" id="GO:0010181">
    <property type="term" value="F:FMN binding"/>
    <property type="evidence" value="ECO:0007669"/>
    <property type="project" value="TreeGrafter"/>
</dbReference>
<dbReference type="GO" id="GO:0008652">
    <property type="term" value="P:amino acid biosynthetic process"/>
    <property type="evidence" value="ECO:0007669"/>
    <property type="project" value="UniProtKB-KW"/>
</dbReference>
<dbReference type="GO" id="GO:0009073">
    <property type="term" value="P:aromatic amino acid family biosynthetic process"/>
    <property type="evidence" value="ECO:0007669"/>
    <property type="project" value="UniProtKB-KW"/>
</dbReference>
<dbReference type="GO" id="GO:0009423">
    <property type="term" value="P:chorismate biosynthetic process"/>
    <property type="evidence" value="ECO:0007669"/>
    <property type="project" value="UniProtKB-UniRule"/>
</dbReference>
<dbReference type="CDD" id="cd07304">
    <property type="entry name" value="Chorismate_synthase"/>
    <property type="match status" value="1"/>
</dbReference>
<dbReference type="FunFam" id="3.60.150.10:FF:000003">
    <property type="entry name" value="Chorismate synthase"/>
    <property type="match status" value="1"/>
</dbReference>
<dbReference type="Gene3D" id="3.60.150.10">
    <property type="entry name" value="Chorismate synthase AroC"/>
    <property type="match status" value="1"/>
</dbReference>
<dbReference type="HAMAP" id="MF_00300">
    <property type="entry name" value="Chorismate_synth"/>
    <property type="match status" value="1"/>
</dbReference>
<dbReference type="InterPro" id="IPR000453">
    <property type="entry name" value="Chorismate_synth"/>
</dbReference>
<dbReference type="InterPro" id="IPR035904">
    <property type="entry name" value="Chorismate_synth_AroC_sf"/>
</dbReference>
<dbReference type="InterPro" id="IPR020541">
    <property type="entry name" value="Chorismate_synthase_CS"/>
</dbReference>
<dbReference type="NCBIfam" id="TIGR00033">
    <property type="entry name" value="aroC"/>
    <property type="match status" value="1"/>
</dbReference>
<dbReference type="NCBIfam" id="NF003793">
    <property type="entry name" value="PRK05382.1"/>
    <property type="match status" value="1"/>
</dbReference>
<dbReference type="PANTHER" id="PTHR21085">
    <property type="entry name" value="CHORISMATE SYNTHASE"/>
    <property type="match status" value="1"/>
</dbReference>
<dbReference type="PANTHER" id="PTHR21085:SF0">
    <property type="entry name" value="CHORISMATE SYNTHASE"/>
    <property type="match status" value="1"/>
</dbReference>
<dbReference type="Pfam" id="PF01264">
    <property type="entry name" value="Chorismate_synt"/>
    <property type="match status" value="1"/>
</dbReference>
<dbReference type="PIRSF" id="PIRSF001456">
    <property type="entry name" value="Chorismate_synth"/>
    <property type="match status" value="1"/>
</dbReference>
<dbReference type="SUPFAM" id="SSF103263">
    <property type="entry name" value="Chorismate synthase, AroC"/>
    <property type="match status" value="1"/>
</dbReference>
<dbReference type="PROSITE" id="PS00787">
    <property type="entry name" value="CHORISMATE_SYNTHASE_1"/>
    <property type="match status" value="1"/>
</dbReference>
<dbReference type="PROSITE" id="PS00789">
    <property type="entry name" value="CHORISMATE_SYNTHASE_3"/>
    <property type="match status" value="1"/>
</dbReference>